<proteinExistence type="evidence at protein level"/>
<sequence length="975" mass="107616">MRWGHHLPRASWGSGFRRALQRPDDRIPFLIHWSWPLQGERPFGPPRAFIRHHGSSVDSAPPPGRHGRLFPSASATEAIQRHRRNLAEWFSRLPREERQFGPTFALDTVHVDPVIRESTPDELLRPPAELALEHQPPQAGLPPLALSQLFNPDACGRRVQTVVLYGTVGTGKSTLVRKMVLDWCYGRLPAFELLIPFSCEDLSSLGPAPASLCQLVAQRYTPLKEVLPLMAAAGSHLLFVLHGLEHLNLDFRLAGTGLCSDPEEPQEPAAIIVNLLRKYMLPQASILVTTRPSAIGRIPSKYVGRYGEICGFSDTNLQKLYFQLRLNQPYCGYAVGGSGVSATPAQRDHLVQMLSRNLEGHHQIAAACFLPSYCWLVCATLHFLHAPTPAGQTLTSIYTSFLRLNFSGETLDSTDPSNLSLMAYAARTMGKLAYEGVSSRKTYFSEEDVCGCLEAGIRTEEEFQLLHIFRRDALRFFLAPCVEPGRAGTFVFTVPAMQEYLAALYIVLGLRKTTLQKVGKEVAELVGRVGEDVSLVLGIMAKLLPLRALPLLFNLIKVVPRVFGRMVGKSREAVAQAMVLEMFREEDYYNDDVLDQMGASILGVEGPRRHPDEPPEDEVFELFPMFMGGLLSAHNRAVLAQLGCPIKNLDALENAQAIKKKLGKLGRQVLPPSELLDHLFFHYEFQNQRFSAEVLSSLRQLNLAGVRMTPVKCTVVAAVLGSGRHALDEVNLASCQLDPAGLRTLLPVFLRARKLGLQLNSLGPEACKDLRDLLLHDQCQITTLRLSNNPLTAAGVAVLMEGLAGNTSVTHLSLLHTGLGDEGLELLAAQLDRNRQLQELNVAYNGAGDTAALALARAAREHPSLELLHLYFNELSSEGRQVLRDLGGAAEGGARVVVSLTEGTAVSEYWSVILSEVQRNLNSWDRARVQRHLELLLRDLEDSRGATLNPWRKAQLLRVEGEVRALLEQLGSSGS</sequence>
<gene>
    <name type="primary">NLRX1</name>
    <name evidence="17" type="synonym">NOD5</name>
    <name evidence="13" type="synonym">NOD9</name>
</gene>
<keyword id="KW-0002">3D-structure</keyword>
<keyword id="KW-0025">Alternative splicing</keyword>
<keyword id="KW-0067">ATP-binding</keyword>
<keyword id="KW-0945">Host-virus interaction</keyword>
<keyword id="KW-0391">Immunity</keyword>
<keyword id="KW-0399">Innate immunity</keyword>
<keyword id="KW-0433">Leucine-rich repeat</keyword>
<keyword id="KW-0472">Membrane</keyword>
<keyword id="KW-0496">Mitochondrion</keyword>
<keyword id="KW-1000">Mitochondrion outer membrane</keyword>
<keyword id="KW-0547">Nucleotide-binding</keyword>
<keyword id="KW-1267">Proteomics identification</keyword>
<keyword id="KW-1185">Reference proteome</keyword>
<keyword id="KW-0677">Repeat</keyword>
<keyword id="KW-0809">Transit peptide</keyword>
<name>NLRX1_HUMAN</name>
<comment type="function">
    <text evidence="1 7 8 10 12">Participates in antiviral signaling. Acts as a negative regulator of MAVS-mediated antiviral responses, through the inhibition of the virus-induced RLH (RIG-like helicase)-MAVS interaction (PubMed:18200010). Instead, promotes autophagy by interacting with TUFM and subsequently recruiting the autophagy-related proteins ATG5 and ATG12 (PubMed:22749352). Also regulates MAVS-dependent NLRP3 inflammasome activation to attenuate apoptosis (PubMed:27393910). Has no inhibitory function on NF-kappa-B signaling pathway, but enhances NF-kappa-B and JUN N-terminal kinase dependent signaling through the production of reactive oxygen species (PubMed:18219313). Regulates viral mediated-inflammation and energy metabolism in a sex-dependent manner (By similarity). In females, prevents uncontrolled inflammation and energy metabolism and thus, may contribute to the sex differences observed in infectious and inflammatory diseases (By similarity).</text>
</comment>
<comment type="subunit">
    <text evidence="7 9 10">Homohexamer (PubMed:22386589). Interacts with MAVS (PubMed:18200010). Interacts with TUFM (PubMed:22749352).</text>
</comment>
<comment type="subunit">
    <text evidence="11">(Microbial infection) Interacts with influenza A virus protein PB1-F2.</text>
</comment>
<comment type="interaction">
    <interactant intactId="EBI-3893071">
        <id>Q86UT6</id>
    </interactant>
    <interactant intactId="EBI-359097">
        <id>P49411</id>
        <label>TUFM</label>
    </interactant>
    <organismsDiffer>false</organismsDiffer>
    <experiments>2</experiments>
</comment>
<comment type="interaction">
    <interactant intactId="EBI-3893071">
        <id>Q86UT6</id>
    </interactant>
    <interactant intactId="EBI-6117196">
        <id>Q6PDS3</id>
        <label>Sarm1</label>
    </interactant>
    <organismsDiffer>true</organismsDiffer>
    <experiments>2</experiments>
</comment>
<comment type="interaction">
    <interactant intactId="EBI-15680006">
        <id>Q86UT6-1</id>
    </interactant>
    <interactant intactId="EBI-15577799">
        <id>Q7Z434-1</id>
        <label>MAVS</label>
    </interactant>
    <organismsDiffer>false</organismsDiffer>
    <experiments>3</experiments>
</comment>
<comment type="subcellular location">
    <subcellularLocation>
        <location evidence="7 8 12">Mitochondrion outer membrane</location>
    </subcellularLocation>
</comment>
<comment type="alternative products">
    <event type="alternative splicing"/>
    <isoform>
        <id>Q86UT6-1</id>
        <name>1</name>
        <sequence type="displayed"/>
    </isoform>
    <isoform>
        <id>Q86UT6-2</id>
        <name>2</name>
        <sequence type="described" ref="VSP_027158 VSP_027159"/>
    </isoform>
</comment>
<comment type="tissue specificity">
    <text evidence="6 7 8">Ubiquitously expressed. Strongest expression in mammary gland, heart and muscle. Detected in HeLa, HEK293T, THP-1, HL-60, Raji and Jurkat cell lines (at protein level).</text>
</comment>
<comment type="domain">
    <text evidence="9">The LRRCT domain mediates homodimerization and LRRNT mediates trimerization of the dimers.</text>
</comment>
<comment type="similarity">
    <text evidence="15">Belongs to the NLRP family.</text>
</comment>
<comment type="sequence caution" evidence="15">
    <conflict type="erroneous initiation">
        <sequence resource="EMBL-CDS" id="BAB15075"/>
    </conflict>
</comment>
<comment type="sequence caution" evidence="15">
    <conflict type="erroneous initiation">
        <sequence resource="EMBL-CDS" id="BAG51714"/>
    </conflict>
    <text>Truncated N-terminus.</text>
</comment>
<comment type="sequence caution" evidence="15">
    <conflict type="erroneous termination">
        <sequence resource="EMBL-CDS" id="BAG51714"/>
    </conflict>
    <text>Truncated C-terminus.</text>
</comment>
<evidence type="ECO:0000250" key="1">
    <source>
        <dbReference type="UniProtKB" id="Q3TL44"/>
    </source>
</evidence>
<evidence type="ECO:0000255" key="2">
    <source>
        <dbReference type="PROSITE-ProRule" id="PRU00136"/>
    </source>
</evidence>
<evidence type="ECO:0000269" key="3">
    <source>
    </source>
</evidence>
<evidence type="ECO:0000269" key="4">
    <source>
    </source>
</evidence>
<evidence type="ECO:0000269" key="5">
    <source>
    </source>
</evidence>
<evidence type="ECO:0000269" key="6">
    <source>
    </source>
</evidence>
<evidence type="ECO:0000269" key="7">
    <source>
    </source>
</evidence>
<evidence type="ECO:0000269" key="8">
    <source>
    </source>
</evidence>
<evidence type="ECO:0000269" key="9">
    <source>
    </source>
</evidence>
<evidence type="ECO:0000269" key="10">
    <source>
    </source>
</evidence>
<evidence type="ECO:0000269" key="11">
    <source>
    </source>
</evidence>
<evidence type="ECO:0000269" key="12">
    <source>
    </source>
</evidence>
<evidence type="ECO:0000303" key="13">
    <source>
    </source>
</evidence>
<evidence type="ECO:0000303" key="14">
    <source>
    </source>
</evidence>
<evidence type="ECO:0000305" key="15"/>
<evidence type="ECO:0000305" key="16">
    <source>
    </source>
</evidence>
<evidence type="ECO:0000312" key="17">
    <source>
        <dbReference type="EMBL" id="ABO40480.1"/>
    </source>
</evidence>
<evidence type="ECO:0007829" key="18">
    <source>
        <dbReference type="PDB" id="3UN9"/>
    </source>
</evidence>
<reference key="1">
    <citation type="journal article" date="2003" name="Nat. Rev. Immunol.">
        <title>NODs: intracellular proteins involved in inflammation and apoptosis.</title>
        <authorList>
            <person name="Inohara N."/>
            <person name="Nunez G."/>
        </authorList>
    </citation>
    <scope>NUCLEOTIDE SEQUENCE [MRNA] (ISOFORM 1)</scope>
    <scope>VARIANTS SER-63 AND GLU-793</scope>
</reference>
<reference key="2">
    <citation type="submission" date="2007-02" db="EMBL/GenBank/DDBJ databases">
        <authorList>
            <person name="Kronos K."/>
        </authorList>
    </citation>
    <scope>NUCLEOTIDE SEQUENCE [MRNA] (ISOFORM 1)</scope>
</reference>
<reference key="3">
    <citation type="submission" date="2002-10" db="EMBL/GenBank/DDBJ databases">
        <title>Identification of a 500-kb region of common allelic loss in chromosome 11q23 in non-MYCN amplified type of neuroblastoma.</title>
        <authorList>
            <person name="Kubo T."/>
            <person name="Arai Y."/>
            <person name="Ohira M."/>
            <person name="Gamou T."/>
            <person name="Maeno G."/>
            <person name="Sakiyama T."/>
            <person name="Toyoda A."/>
            <person name="Hattori M."/>
            <person name="Sakaki Y."/>
            <person name="Nakagawara A."/>
            <person name="Ohki M."/>
        </authorList>
    </citation>
    <scope>NUCLEOTIDE SEQUENCE [LARGE SCALE MRNA] (ISOFORM 1)</scope>
</reference>
<reference key="4">
    <citation type="journal article" date="2004" name="Nat. Genet.">
        <title>Complete sequencing and characterization of 21,243 full-length human cDNAs.</title>
        <authorList>
            <person name="Ota T."/>
            <person name="Suzuki Y."/>
            <person name="Nishikawa T."/>
            <person name="Otsuki T."/>
            <person name="Sugiyama T."/>
            <person name="Irie R."/>
            <person name="Wakamatsu A."/>
            <person name="Hayashi K."/>
            <person name="Sato H."/>
            <person name="Nagai K."/>
            <person name="Kimura K."/>
            <person name="Makita H."/>
            <person name="Sekine M."/>
            <person name="Obayashi M."/>
            <person name="Nishi T."/>
            <person name="Shibahara T."/>
            <person name="Tanaka T."/>
            <person name="Ishii S."/>
            <person name="Yamamoto J."/>
            <person name="Saito K."/>
            <person name="Kawai Y."/>
            <person name="Isono Y."/>
            <person name="Nakamura Y."/>
            <person name="Nagahari K."/>
            <person name="Murakami K."/>
            <person name="Yasuda T."/>
            <person name="Iwayanagi T."/>
            <person name="Wagatsuma M."/>
            <person name="Shiratori A."/>
            <person name="Sudo H."/>
            <person name="Hosoiri T."/>
            <person name="Kaku Y."/>
            <person name="Kodaira H."/>
            <person name="Kondo H."/>
            <person name="Sugawara M."/>
            <person name="Takahashi M."/>
            <person name="Kanda K."/>
            <person name="Yokoi T."/>
            <person name="Furuya T."/>
            <person name="Kikkawa E."/>
            <person name="Omura Y."/>
            <person name="Abe K."/>
            <person name="Kamihara K."/>
            <person name="Katsuta N."/>
            <person name="Sato K."/>
            <person name="Tanikawa M."/>
            <person name="Yamazaki M."/>
            <person name="Ninomiya K."/>
            <person name="Ishibashi T."/>
            <person name="Yamashita H."/>
            <person name="Murakawa K."/>
            <person name="Fujimori K."/>
            <person name="Tanai H."/>
            <person name="Kimata M."/>
            <person name="Watanabe M."/>
            <person name="Hiraoka S."/>
            <person name="Chiba Y."/>
            <person name="Ishida S."/>
            <person name="Ono Y."/>
            <person name="Takiguchi S."/>
            <person name="Watanabe S."/>
            <person name="Yosida M."/>
            <person name="Hotuta T."/>
            <person name="Kusano J."/>
            <person name="Kanehori K."/>
            <person name="Takahashi-Fujii A."/>
            <person name="Hara H."/>
            <person name="Tanase T.-O."/>
            <person name="Nomura Y."/>
            <person name="Togiya S."/>
            <person name="Komai F."/>
            <person name="Hara R."/>
            <person name="Takeuchi K."/>
            <person name="Arita M."/>
            <person name="Imose N."/>
            <person name="Musashino K."/>
            <person name="Yuuki H."/>
            <person name="Oshima A."/>
            <person name="Sasaki N."/>
            <person name="Aotsuka S."/>
            <person name="Yoshikawa Y."/>
            <person name="Matsunawa H."/>
            <person name="Ichihara T."/>
            <person name="Shiohata N."/>
            <person name="Sano S."/>
            <person name="Moriya S."/>
            <person name="Momiyama H."/>
            <person name="Satoh N."/>
            <person name="Takami S."/>
            <person name="Terashima Y."/>
            <person name="Suzuki O."/>
            <person name="Nakagawa S."/>
            <person name="Senoh A."/>
            <person name="Mizoguchi H."/>
            <person name="Goto Y."/>
            <person name="Shimizu F."/>
            <person name="Wakebe H."/>
            <person name="Hishigaki H."/>
            <person name="Watanabe T."/>
            <person name="Sugiyama A."/>
            <person name="Takemoto M."/>
            <person name="Kawakami B."/>
            <person name="Yamazaki M."/>
            <person name="Watanabe K."/>
            <person name="Kumagai A."/>
            <person name="Itakura S."/>
            <person name="Fukuzumi Y."/>
            <person name="Fujimori Y."/>
            <person name="Komiyama M."/>
            <person name="Tashiro H."/>
            <person name="Tanigami A."/>
            <person name="Fujiwara T."/>
            <person name="Ono T."/>
            <person name="Yamada K."/>
            <person name="Fujii Y."/>
            <person name="Ozaki K."/>
            <person name="Hirao M."/>
            <person name="Ohmori Y."/>
            <person name="Kawabata A."/>
            <person name="Hikiji T."/>
            <person name="Kobatake N."/>
            <person name="Inagaki H."/>
            <person name="Ikema Y."/>
            <person name="Okamoto S."/>
            <person name="Okitani R."/>
            <person name="Kawakami T."/>
            <person name="Noguchi S."/>
            <person name="Itoh T."/>
            <person name="Shigeta K."/>
            <person name="Senba T."/>
            <person name="Matsumura K."/>
            <person name="Nakajima Y."/>
            <person name="Mizuno T."/>
            <person name="Morinaga M."/>
            <person name="Sasaki M."/>
            <person name="Togashi T."/>
            <person name="Oyama M."/>
            <person name="Hata H."/>
            <person name="Watanabe M."/>
            <person name="Komatsu T."/>
            <person name="Mizushima-Sugano J."/>
            <person name="Satoh T."/>
            <person name="Shirai Y."/>
            <person name="Takahashi Y."/>
            <person name="Nakagawa K."/>
            <person name="Okumura K."/>
            <person name="Nagase T."/>
            <person name="Nomura N."/>
            <person name="Kikuchi H."/>
            <person name="Masuho Y."/>
            <person name="Yamashita R."/>
            <person name="Nakai K."/>
            <person name="Yada T."/>
            <person name="Nakamura Y."/>
            <person name="Ohara O."/>
            <person name="Isogai T."/>
            <person name="Sugano S."/>
        </authorList>
    </citation>
    <scope>NUCLEOTIDE SEQUENCE [LARGE SCALE MRNA] (ISOFORM 1)</scope>
    <scope>VARIANTS SER-63 AND GLU-793</scope>
    <source>
        <tissue>Colon</tissue>
        <tissue>Placenta</tissue>
        <tissue>Tongue</tissue>
    </source>
</reference>
<reference key="5">
    <citation type="journal article" date="2004" name="Genome Res.">
        <title>The status, quality, and expansion of the NIH full-length cDNA project: the Mammalian Gene Collection (MGC).</title>
        <authorList>
            <consortium name="The MGC Project Team"/>
        </authorList>
    </citation>
    <scope>NUCLEOTIDE SEQUENCE [LARGE SCALE MRNA] (ISOFORM 1)</scope>
    <scope>NUCLEOTIDE SEQUENCE [LARGE SCALE MRNA] OF 214-975 (ISOFORM 2)</scope>
    <scope>VARIANT GLU-793</scope>
    <source>
        <tissue>Bone</tissue>
        <tissue>Brain</tissue>
    </source>
</reference>
<reference key="6">
    <citation type="journal article" date="2005" name="Annu. Rev. Biochem.">
        <title>NOD-LRR proteins: role in host-microbial interactions and inflammatory disease.</title>
        <authorList>
            <person name="Inohara N."/>
            <person name="Chamaillard M."/>
            <person name="McDonald C."/>
            <person name="Nunez G."/>
        </authorList>
    </citation>
    <scope>TISSUE SPECIFICITY</scope>
</reference>
<reference key="7">
    <citation type="journal article" date="2005" name="Annu. Rev. Immunol.">
        <title>CATERPILLER: a novel gene family important in immunity, cell death, and diseases.</title>
        <authorList>
            <person name="Ting J.P.-Y."/>
            <person name="Davis B.K."/>
        </authorList>
    </citation>
    <scope>REVIEW</scope>
</reference>
<reference key="8">
    <citation type="journal article" date="2008" name="EMBO Rep.">
        <title>NLRX1 is a mitochondrial NOD-like receptor that amplifies NF-kappaB and JNK pathways by inducing reactive oxygen species production.</title>
        <authorList>
            <person name="Tattoli I."/>
            <person name="Carneiro L.A."/>
            <person name="Jehanno M."/>
            <person name="Magalhaes J.G."/>
            <person name="Shu Y."/>
            <person name="Philpott D.J."/>
            <person name="Arnoult D."/>
            <person name="Girardin S.E."/>
        </authorList>
    </citation>
    <scope>FUNCTION</scope>
    <scope>SUBCELLULAR LOCATION</scope>
    <scope>TISSUE SPECIFICITY</scope>
</reference>
<reference key="9">
    <citation type="journal article" date="2008" name="Nature">
        <title>NLRX1 is a regulator of mitochondrial antiviral immunity.</title>
        <authorList>
            <person name="Moore C.B."/>
            <person name="Bergstralh D.T."/>
            <person name="Duncan J.A."/>
            <person name="Lei Y."/>
            <person name="Morrison T.E."/>
            <person name="Zimmermann A.G."/>
            <person name="Accavitti-Loper M.A."/>
            <person name="Madden V.J."/>
            <person name="Sun L."/>
            <person name="Ye Z."/>
            <person name="Lich J.D."/>
            <person name="Heise M.T."/>
            <person name="Chen Z."/>
            <person name="Ting J.P.-Y."/>
        </authorList>
    </citation>
    <scope>FUNCTION</scope>
    <scope>INTERACTION WITH MAVS</scope>
    <scope>SUBCELLULAR LOCATION</scope>
    <scope>TISSUE SPECIFICITY</scope>
</reference>
<reference key="10">
    <citation type="journal article" date="2012" name="Immunity">
        <title>The mitochondrial proteins NLRX1 and TUFM form a complex that regulates type I interferon and autophagy.</title>
        <authorList>
            <person name="Lei Y."/>
            <person name="Wen H."/>
            <person name="Yu Y."/>
            <person name="Taxman D.J."/>
            <person name="Zhang L."/>
            <person name="Widman D.G."/>
            <person name="Swanson K.V."/>
            <person name="Wen K.W."/>
            <person name="Damania B."/>
            <person name="Moore C.B."/>
            <person name="Giguere P.M."/>
            <person name="Siderovski D.P."/>
            <person name="Hiscott J."/>
            <person name="Razani B."/>
            <person name="Semenkovich C.F."/>
            <person name="Chen X."/>
            <person name="Ting J.P."/>
        </authorList>
    </citation>
    <scope>FUNCTION</scope>
    <scope>SUBCELLULAR LOCATION</scope>
    <scope>INTERACTION WITH TUFM</scope>
</reference>
<reference key="11">
    <citation type="journal article" date="2016" name="Mol. Immunol.">
        <title>NLRX1 attenuates apoptosis and inflammatory responses in myocardial ischemia by inhibiting MAVS-dependent NLRP3 inflammasome activation.</title>
        <authorList>
            <person name="Li H."/>
            <person name="Zhang S."/>
            <person name="Li F."/>
            <person name="Qin L."/>
        </authorList>
    </citation>
    <scope>FUNCTION</scope>
    <scope>SUBCELLULAR LOCATION</scope>
</reference>
<reference key="12">
    <citation type="journal article" date="2012" name="Immunity">
        <title>Structure and functional characterization of the RNA-binding element of the NLRX1 innate immune modulator.</title>
        <authorList>
            <person name="Hong M."/>
            <person name="Yoon S.I."/>
            <person name="Wilson I.A."/>
        </authorList>
    </citation>
    <scope>X-RAY CRYSTALLOGRAPHY (2.65 ANGSTROMS) OF 629-975</scope>
    <scope>LRR REPEATS</scope>
    <scope>SUBUNIT</scope>
</reference>
<reference key="13">
    <citation type="journal article" date="2014" name="Proc. Natl. Acad. Sci. U.S.A.">
        <title>NLRX1 prevents mitochondrial induced apoptosis and enhances macrophage antiviral immunity by interacting with influenza virus PB1-F2 protein.</title>
        <authorList>
            <person name="Jaworska J."/>
            <person name="Coulombe F."/>
            <person name="Downey J."/>
            <person name="Tzelepis F."/>
            <person name="Shalaby K."/>
            <person name="Tattoli I."/>
            <person name="Berube J."/>
            <person name="Rousseau S."/>
            <person name="Martin J.G."/>
            <person name="Girardin S.E."/>
            <person name="McCullers J.A."/>
            <person name="Divangahi M."/>
        </authorList>
    </citation>
    <scope>INTERACTION WITH INFLUENZA A VIRUS PROTEIN PB1-F2 (MICROBIAL INFECTION)</scope>
</reference>
<feature type="transit peptide" description="Mitochondrion">
    <location>
        <begin position="1"/>
        <end position="86"/>
    </location>
</feature>
<feature type="chain" id="PRO_0000296190" description="NLR family member X1">
    <location>
        <begin position="87"/>
        <end position="975"/>
    </location>
</feature>
<feature type="domain" description="NACHT" evidence="2">
    <location>
        <begin position="160"/>
        <end position="483"/>
    </location>
</feature>
<feature type="domain" description="LRRNT" evidence="16">
    <location>
        <begin position="667"/>
        <end position="694"/>
    </location>
</feature>
<feature type="repeat" description="LRR 1" evidence="9">
    <location>
        <begin position="695"/>
        <end position="718"/>
    </location>
</feature>
<feature type="repeat" description="LRR 2" evidence="9">
    <location>
        <begin position="724"/>
        <end position="747"/>
    </location>
</feature>
<feature type="repeat" description="LRR 3" evidence="9">
    <location>
        <begin position="749"/>
        <end position="777"/>
    </location>
</feature>
<feature type="repeat" description="LRR 4" evidence="9">
    <location>
        <begin position="778"/>
        <end position="801"/>
    </location>
</feature>
<feature type="repeat" description="LRR 5" evidence="9">
    <location>
        <begin position="811"/>
        <end position="834"/>
    </location>
</feature>
<feature type="repeat" description="LRR 6" evidence="9">
    <location>
        <begin position="835"/>
        <end position="857"/>
    </location>
</feature>
<feature type="repeat" description="LRR 7" evidence="9">
    <location>
        <begin position="858"/>
        <end position="877"/>
    </location>
</feature>
<feature type="repeat" description="LRR 8" evidence="9">
    <location>
        <begin position="878"/>
        <end position="899"/>
    </location>
</feature>
<feature type="domain" description="LRRCT" evidence="16">
    <location>
        <begin position="906"/>
        <end position="970"/>
    </location>
</feature>
<feature type="region of interest" description="Required for interaction with MAVS" evidence="7">
    <location>
        <begin position="75"/>
        <end position="556"/>
    </location>
</feature>
<feature type="region of interest" description="Required for the repression of MAVS-induced interferon signaling" evidence="7">
    <location>
        <begin position="556"/>
        <end position="974"/>
    </location>
</feature>
<feature type="binding site" evidence="2">
    <location>
        <begin position="166"/>
        <end position="173"/>
    </location>
    <ligand>
        <name>ATP</name>
        <dbReference type="ChEBI" id="CHEBI:30616"/>
    </ligand>
</feature>
<feature type="splice variant" id="VSP_027158" description="In isoform 2." evidence="14">
    <original>HLYFNELSSEGRQVLRDLGGAAEGGARVVVSLTEGTAVSEYWSVILSEVQRNL</original>
    <variation>QGVAIQMCWKLPLLPYAHLWTPRMPSHWCFLLILMPPLPQWYDGLVAPRGRCT</variation>
    <location>
        <begin position="869"/>
        <end position="921"/>
    </location>
</feature>
<feature type="splice variant" id="VSP_027159" description="In isoform 2." evidence="14">
    <location>
        <begin position="922"/>
        <end position="975"/>
    </location>
</feature>
<feature type="sequence variant" id="VAR_034614" description="In dbSNP:rs643423." evidence="3 4">
    <original>P</original>
    <variation>S</variation>
    <location>
        <position position="63"/>
    </location>
</feature>
<feature type="sequence variant" id="VAR_034615" description="In dbSNP:rs3809045.">
    <original>R</original>
    <variation>L</variation>
    <location>
        <position position="125"/>
    </location>
</feature>
<feature type="sequence variant" id="VAR_034616" description="In dbSNP:rs4245191." evidence="3 4 5">
    <original>A</original>
    <variation>E</variation>
    <location>
        <position position="793"/>
    </location>
</feature>
<feature type="sequence variant" id="VAR_034617" description="In dbSNP:rs35500631.">
    <original>A</original>
    <variation>S</variation>
    <location>
        <position position="843"/>
    </location>
</feature>
<feature type="sequence conflict" description="In Ref. 4; BAG53014." evidence="15" ref="4">
    <original>R</original>
    <variation>C</variation>
    <location>
        <position position="325"/>
    </location>
</feature>
<feature type="sequence conflict" description="In Ref. 4; BAG51714." evidence="15" ref="4">
    <original>A</original>
    <variation>T</variation>
    <location>
        <position position="575"/>
    </location>
</feature>
<feature type="helix" evidence="18">
    <location>
        <begin position="672"/>
        <end position="686"/>
    </location>
</feature>
<feature type="helix" evidence="18">
    <location>
        <begin position="688"/>
        <end position="695"/>
    </location>
</feature>
<feature type="strand" evidence="18">
    <location>
        <begin position="700"/>
        <end position="702"/>
    </location>
</feature>
<feature type="helix" evidence="18">
    <location>
        <begin position="710"/>
        <end position="720"/>
    </location>
</feature>
<feature type="strand" evidence="18">
    <location>
        <begin position="727"/>
        <end position="731"/>
    </location>
</feature>
<feature type="helix" evidence="18">
    <location>
        <begin position="739"/>
        <end position="744"/>
    </location>
</feature>
<feature type="helix" evidence="18">
    <location>
        <begin position="746"/>
        <end position="750"/>
    </location>
</feature>
<feature type="strand" evidence="18">
    <location>
        <begin position="752"/>
        <end position="756"/>
    </location>
</feature>
<feature type="helix" evidence="18">
    <location>
        <begin position="764"/>
        <end position="775"/>
    </location>
</feature>
<feature type="strand" evidence="18">
    <location>
        <begin position="783"/>
        <end position="785"/>
    </location>
</feature>
<feature type="helix" evidence="18">
    <location>
        <begin position="792"/>
        <end position="804"/>
    </location>
</feature>
<feature type="strand" evidence="18">
    <location>
        <begin position="811"/>
        <end position="813"/>
    </location>
</feature>
<feature type="helix" evidence="18">
    <location>
        <begin position="820"/>
        <end position="830"/>
    </location>
</feature>
<feature type="helix" evidence="18">
    <location>
        <begin position="831"/>
        <end position="833"/>
    </location>
</feature>
<feature type="strand" evidence="18">
    <location>
        <begin position="839"/>
        <end position="841"/>
    </location>
</feature>
<feature type="helix" evidence="18">
    <location>
        <begin position="849"/>
        <end position="861"/>
    </location>
</feature>
<feature type="strand" evidence="18">
    <location>
        <begin position="867"/>
        <end position="869"/>
    </location>
</feature>
<feature type="helix" evidence="18">
    <location>
        <begin position="877"/>
        <end position="885"/>
    </location>
</feature>
<feature type="strand" evidence="18">
    <location>
        <begin position="895"/>
        <end position="897"/>
    </location>
</feature>
<feature type="helix" evidence="18">
    <location>
        <begin position="907"/>
        <end position="920"/>
    </location>
</feature>
<feature type="helix" evidence="18">
    <location>
        <begin position="926"/>
        <end position="945"/>
    </location>
</feature>
<feature type="helix" evidence="18">
    <location>
        <begin position="950"/>
        <end position="969"/>
    </location>
</feature>
<dbReference type="EMBL" id="AY245437">
    <property type="protein sequence ID" value="AAP31240.1"/>
    <property type="molecule type" value="mRNA"/>
</dbReference>
<dbReference type="EMBL" id="BK001111">
    <property type="protein sequence ID" value="DAA01244.1"/>
    <property type="molecule type" value="mRNA"/>
</dbReference>
<dbReference type="EMBL" id="EF452237">
    <property type="protein sequence ID" value="ABO40480.1"/>
    <property type="molecule type" value="mRNA"/>
</dbReference>
<dbReference type="EMBL" id="AB094095">
    <property type="protein sequence ID" value="BAC76049.1"/>
    <property type="molecule type" value="mRNA"/>
</dbReference>
<dbReference type="EMBL" id="AK025131">
    <property type="protein sequence ID" value="BAB15075.1"/>
    <property type="status" value="ALT_INIT"/>
    <property type="molecule type" value="mRNA"/>
</dbReference>
<dbReference type="EMBL" id="AK056454">
    <property type="protein sequence ID" value="BAG51714.1"/>
    <property type="status" value="ALT_SEQ"/>
    <property type="molecule type" value="mRNA"/>
</dbReference>
<dbReference type="EMBL" id="AK095247">
    <property type="protein sequence ID" value="BAG53014.1"/>
    <property type="molecule type" value="mRNA"/>
</dbReference>
<dbReference type="EMBL" id="AK291716">
    <property type="protein sequence ID" value="BAF84405.1"/>
    <property type="molecule type" value="mRNA"/>
</dbReference>
<dbReference type="EMBL" id="BC013199">
    <property type="protein sequence ID" value="AAH13199.3"/>
    <property type="molecule type" value="mRNA"/>
</dbReference>
<dbReference type="EMBL" id="BC110890">
    <property type="protein sequence ID" value="AAI10891.1"/>
    <property type="molecule type" value="mRNA"/>
</dbReference>
<dbReference type="CCDS" id="CCDS44752.1">
    <molecule id="Q86UT6-2"/>
</dbReference>
<dbReference type="CCDS" id="CCDS8416.1">
    <molecule id="Q86UT6-1"/>
</dbReference>
<dbReference type="RefSeq" id="NP_001269072.1">
    <molecule id="Q86UT6-1"/>
    <property type="nucleotide sequence ID" value="NM_001282143.2"/>
</dbReference>
<dbReference type="RefSeq" id="NP_001269073.1">
    <molecule id="Q86UT6-1"/>
    <property type="nucleotide sequence ID" value="NM_001282144.2"/>
</dbReference>
<dbReference type="RefSeq" id="NP_001269287.1">
    <molecule id="Q86UT6-1"/>
    <property type="nucleotide sequence ID" value="NM_001282358.2"/>
</dbReference>
<dbReference type="RefSeq" id="NP_078894.2">
    <molecule id="Q86UT6-1"/>
    <property type="nucleotide sequence ID" value="NM_024618.3"/>
</dbReference>
<dbReference type="RefSeq" id="NP_733840.1">
    <molecule id="Q86UT6-2"/>
    <property type="nucleotide sequence ID" value="NM_170722.2"/>
</dbReference>
<dbReference type="RefSeq" id="XP_005271726.1">
    <molecule id="Q86UT6-1"/>
    <property type="nucleotide sequence ID" value="XM_005271669.2"/>
</dbReference>
<dbReference type="RefSeq" id="XP_006718967.1">
    <molecule id="Q86UT6-2"/>
    <property type="nucleotide sequence ID" value="XM_006718904.2"/>
</dbReference>
<dbReference type="RefSeq" id="XP_011541282.1">
    <molecule id="Q86UT6-1"/>
    <property type="nucleotide sequence ID" value="XM_011542980.2"/>
</dbReference>
<dbReference type="RefSeq" id="XP_047283542.1">
    <molecule id="Q86UT6-2"/>
    <property type="nucleotide sequence ID" value="XM_047427586.1"/>
</dbReference>
<dbReference type="RefSeq" id="XP_047283543.1">
    <molecule id="Q86UT6-2"/>
    <property type="nucleotide sequence ID" value="XM_047427587.1"/>
</dbReference>
<dbReference type="RefSeq" id="XP_054225919.1">
    <molecule id="Q86UT6-1"/>
    <property type="nucleotide sequence ID" value="XM_054369944.1"/>
</dbReference>
<dbReference type="RefSeq" id="XP_054225920.1">
    <molecule id="Q86UT6-1"/>
    <property type="nucleotide sequence ID" value="XM_054369945.1"/>
</dbReference>
<dbReference type="RefSeq" id="XP_054225921.1">
    <molecule id="Q86UT6-2"/>
    <property type="nucleotide sequence ID" value="XM_054369946.1"/>
</dbReference>
<dbReference type="RefSeq" id="XP_054225922.1">
    <molecule id="Q86UT6-2"/>
    <property type="nucleotide sequence ID" value="XM_054369947.1"/>
</dbReference>
<dbReference type="RefSeq" id="XP_054225923.1">
    <molecule id="Q86UT6-2"/>
    <property type="nucleotide sequence ID" value="XM_054369948.1"/>
</dbReference>
<dbReference type="PDB" id="3UN9">
    <property type="method" value="X-ray"/>
    <property type="resolution" value="2.65 A"/>
    <property type="chains" value="A/B/C=629-975"/>
</dbReference>
<dbReference type="PDBsum" id="3UN9"/>
<dbReference type="SMR" id="Q86UT6"/>
<dbReference type="BioGRID" id="122796">
    <property type="interactions" value="93"/>
</dbReference>
<dbReference type="DIP" id="DIP-60637N"/>
<dbReference type="FunCoup" id="Q86UT6">
    <property type="interactions" value="1019"/>
</dbReference>
<dbReference type="IntAct" id="Q86UT6">
    <property type="interactions" value="58"/>
</dbReference>
<dbReference type="STRING" id="9606.ENSP00000387334"/>
<dbReference type="GuidetoPHARMACOLOGY" id="1766"/>
<dbReference type="GlyGen" id="Q86UT6">
    <property type="glycosylation" value="2 sites, 1 O-linked glycan (1 site)"/>
</dbReference>
<dbReference type="iPTMnet" id="Q86UT6"/>
<dbReference type="PhosphoSitePlus" id="Q86UT6"/>
<dbReference type="SwissPalm" id="Q86UT6"/>
<dbReference type="BioMuta" id="NLRX1"/>
<dbReference type="DMDM" id="74759406"/>
<dbReference type="jPOST" id="Q86UT6"/>
<dbReference type="MassIVE" id="Q86UT6"/>
<dbReference type="PaxDb" id="9606-ENSP00000387334"/>
<dbReference type="PeptideAtlas" id="Q86UT6"/>
<dbReference type="ProteomicsDB" id="69887">
    <molecule id="Q86UT6-1"/>
</dbReference>
<dbReference type="ProteomicsDB" id="69888">
    <molecule id="Q86UT6-2"/>
</dbReference>
<dbReference type="Pumba" id="Q86UT6"/>
<dbReference type="Antibodypedia" id="45879">
    <property type="antibodies" value="231 antibodies from 35 providers"/>
</dbReference>
<dbReference type="DNASU" id="79671"/>
<dbReference type="Ensembl" id="ENST00000292199.6">
    <molecule id="Q86UT6-1"/>
    <property type="protein sequence ID" value="ENSP00000292199.2"/>
    <property type="gene ID" value="ENSG00000160703.17"/>
</dbReference>
<dbReference type="Ensembl" id="ENST00000409109.6">
    <molecule id="Q86UT6-1"/>
    <property type="protein sequence ID" value="ENSP00000387334.1"/>
    <property type="gene ID" value="ENSG00000160703.17"/>
</dbReference>
<dbReference type="Ensembl" id="ENST00000409991.5">
    <molecule id="Q86UT6-1"/>
    <property type="protein sequence ID" value="ENSP00000386851.1"/>
    <property type="gene ID" value="ENSG00000160703.17"/>
</dbReference>
<dbReference type="Ensembl" id="ENST00000525863.1">
    <molecule id="Q86UT6-2"/>
    <property type="protein sequence ID" value="ENSP00000433442.1"/>
    <property type="gene ID" value="ENSG00000160703.17"/>
</dbReference>
<dbReference type="Ensembl" id="ENST00000706729.1">
    <molecule id="Q86UT6-1"/>
    <property type="protein sequence ID" value="ENSP00000516519.1"/>
    <property type="gene ID" value="ENSG00000160703.17"/>
</dbReference>
<dbReference type="GeneID" id="79671"/>
<dbReference type="KEGG" id="hsa:79671"/>
<dbReference type="MANE-Select" id="ENST00000409109.6">
    <property type="protein sequence ID" value="ENSP00000387334.1"/>
    <property type="RefSeq nucleotide sequence ID" value="NM_001282144.2"/>
    <property type="RefSeq protein sequence ID" value="NP_001269073.1"/>
</dbReference>
<dbReference type="UCSC" id="uc001pvu.5">
    <molecule id="Q86UT6-1"/>
    <property type="organism name" value="human"/>
</dbReference>
<dbReference type="AGR" id="HGNC:29890"/>
<dbReference type="CTD" id="79671"/>
<dbReference type="DisGeNET" id="79671"/>
<dbReference type="GeneCards" id="NLRX1"/>
<dbReference type="HGNC" id="HGNC:29890">
    <property type="gene designation" value="NLRX1"/>
</dbReference>
<dbReference type="HPA" id="ENSG00000160703">
    <property type="expression patterns" value="Tissue enhanced (esophagus)"/>
</dbReference>
<dbReference type="MalaCards" id="NLRX1"/>
<dbReference type="MIM" id="611947">
    <property type="type" value="gene"/>
</dbReference>
<dbReference type="neXtProt" id="NX_Q86UT6"/>
<dbReference type="OpenTargets" id="ENSG00000160703"/>
<dbReference type="PharmGKB" id="PA162398052"/>
<dbReference type="VEuPathDB" id="HostDB:ENSG00000160703"/>
<dbReference type="eggNOG" id="KOG4308">
    <property type="taxonomic scope" value="Eukaryota"/>
</dbReference>
<dbReference type="GeneTree" id="ENSGT00940000159493"/>
<dbReference type="HOGENOM" id="CLU_016769_0_0_1"/>
<dbReference type="InParanoid" id="Q86UT6"/>
<dbReference type="OMA" id="CVEPGHR"/>
<dbReference type="OrthoDB" id="120976at2759"/>
<dbReference type="PAN-GO" id="Q86UT6">
    <property type="GO annotations" value="3 GO annotations based on evolutionary models"/>
</dbReference>
<dbReference type="PhylomeDB" id="Q86UT6"/>
<dbReference type="TreeFam" id="TF331068"/>
<dbReference type="PathwayCommons" id="Q86UT6"/>
<dbReference type="Reactome" id="R-HSA-168928">
    <property type="pathway name" value="DDX58/IFIH1-mediated induction of interferon-alpha/beta"/>
</dbReference>
<dbReference type="Reactome" id="R-HSA-936440">
    <property type="pathway name" value="Negative regulators of DDX58/IFIH1 signaling"/>
</dbReference>
<dbReference type="Reactome" id="R-HSA-9758274">
    <property type="pathway name" value="Regulation of NF-kappa B signaling"/>
</dbReference>
<dbReference type="SignaLink" id="Q86UT6"/>
<dbReference type="SIGNOR" id="Q86UT6"/>
<dbReference type="BioGRID-ORCS" id="79671">
    <property type="hits" value="12 hits in 1157 CRISPR screens"/>
</dbReference>
<dbReference type="ChiTaRS" id="NLRX1">
    <property type="organism name" value="human"/>
</dbReference>
<dbReference type="EvolutionaryTrace" id="Q86UT6"/>
<dbReference type="GeneWiki" id="NLRX1"/>
<dbReference type="GenomeRNAi" id="79671"/>
<dbReference type="Pharos" id="Q86UT6">
    <property type="development level" value="Tbio"/>
</dbReference>
<dbReference type="PRO" id="PR:Q86UT6"/>
<dbReference type="Proteomes" id="UP000005640">
    <property type="component" value="Chromosome 11"/>
</dbReference>
<dbReference type="RNAct" id="Q86UT6">
    <property type="molecule type" value="protein"/>
</dbReference>
<dbReference type="Bgee" id="ENSG00000160703">
    <property type="expression patterns" value="Expressed in lower esophagus mucosa and 188 other cell types or tissues"/>
</dbReference>
<dbReference type="ExpressionAtlas" id="Q86UT6">
    <property type="expression patterns" value="baseline and differential"/>
</dbReference>
<dbReference type="GO" id="GO:0005829">
    <property type="term" value="C:cytosol"/>
    <property type="evidence" value="ECO:0000304"/>
    <property type="project" value="Reactome"/>
</dbReference>
<dbReference type="GO" id="GO:0005741">
    <property type="term" value="C:mitochondrial outer membrane"/>
    <property type="evidence" value="ECO:0000304"/>
    <property type="project" value="Reactome"/>
</dbReference>
<dbReference type="GO" id="GO:0005739">
    <property type="term" value="C:mitochondrion"/>
    <property type="evidence" value="ECO:0000314"/>
    <property type="project" value="HPA"/>
</dbReference>
<dbReference type="GO" id="GO:0005886">
    <property type="term" value="C:plasma membrane"/>
    <property type="evidence" value="ECO:0000314"/>
    <property type="project" value="HPA"/>
</dbReference>
<dbReference type="GO" id="GO:0005524">
    <property type="term" value="F:ATP binding"/>
    <property type="evidence" value="ECO:0007669"/>
    <property type="project" value="UniProtKB-KW"/>
</dbReference>
<dbReference type="GO" id="GO:0045087">
    <property type="term" value="P:innate immune response"/>
    <property type="evidence" value="ECO:0007669"/>
    <property type="project" value="UniProtKB-KW"/>
</dbReference>
<dbReference type="GO" id="GO:0043124">
    <property type="term" value="P:negative regulation of canonical NF-kappaB signal transduction"/>
    <property type="evidence" value="ECO:0000318"/>
    <property type="project" value="GO_Central"/>
</dbReference>
<dbReference type="GO" id="GO:0050728">
    <property type="term" value="P:negative regulation of inflammatory response"/>
    <property type="evidence" value="ECO:0007669"/>
    <property type="project" value="Ensembl"/>
</dbReference>
<dbReference type="GO" id="GO:0045824">
    <property type="term" value="P:negative regulation of innate immune response"/>
    <property type="evidence" value="ECO:0007669"/>
    <property type="project" value="Ensembl"/>
</dbReference>
<dbReference type="GO" id="GO:0032688">
    <property type="term" value="P:negative regulation of interferon-beta production"/>
    <property type="evidence" value="ECO:0007669"/>
    <property type="project" value="Ensembl"/>
</dbReference>
<dbReference type="GO" id="GO:0032715">
    <property type="term" value="P:negative regulation of interleukin-6 production"/>
    <property type="evidence" value="ECO:0007669"/>
    <property type="project" value="Ensembl"/>
</dbReference>
<dbReference type="GO" id="GO:0010936">
    <property type="term" value="P:negative regulation of macrophage cytokine production"/>
    <property type="evidence" value="ECO:0007669"/>
    <property type="project" value="Ensembl"/>
</dbReference>
<dbReference type="GO" id="GO:0039536">
    <property type="term" value="P:negative regulation of RIG-I signaling pathway"/>
    <property type="evidence" value="ECO:0007669"/>
    <property type="project" value="Ensembl"/>
</dbReference>
<dbReference type="FunFam" id="3.40.50.300:FF:001029">
    <property type="entry name" value="NLR family member X1"/>
    <property type="match status" value="1"/>
</dbReference>
<dbReference type="FunFam" id="3.80.10.10:FF:000149">
    <property type="entry name" value="NLR family member X1"/>
    <property type="match status" value="1"/>
</dbReference>
<dbReference type="Gene3D" id="3.40.50.300">
    <property type="entry name" value="P-loop containing nucleotide triphosphate hydrolases"/>
    <property type="match status" value="1"/>
</dbReference>
<dbReference type="Gene3D" id="3.80.10.10">
    <property type="entry name" value="Ribonuclease Inhibitor"/>
    <property type="match status" value="1"/>
</dbReference>
<dbReference type="InterPro" id="IPR001611">
    <property type="entry name" value="Leu-rich_rpt"/>
</dbReference>
<dbReference type="InterPro" id="IPR032675">
    <property type="entry name" value="LRR_dom_sf"/>
</dbReference>
<dbReference type="InterPro" id="IPR007111">
    <property type="entry name" value="NACHT_NTPase"/>
</dbReference>
<dbReference type="InterPro" id="IPR051261">
    <property type="entry name" value="NLR"/>
</dbReference>
<dbReference type="InterPro" id="IPR048900">
    <property type="entry name" value="NLRX1_C"/>
</dbReference>
<dbReference type="InterPro" id="IPR027417">
    <property type="entry name" value="P-loop_NTPase"/>
</dbReference>
<dbReference type="PANTHER" id="PTHR24106">
    <property type="entry name" value="NACHT, LRR AND CARD DOMAINS-CONTAINING"/>
    <property type="match status" value="1"/>
</dbReference>
<dbReference type="Pfam" id="PF13516">
    <property type="entry name" value="LRR_6"/>
    <property type="match status" value="1"/>
</dbReference>
<dbReference type="Pfam" id="PF05729">
    <property type="entry name" value="NACHT"/>
    <property type="match status" value="1"/>
</dbReference>
<dbReference type="Pfam" id="PF21402">
    <property type="entry name" value="NLRX1_C"/>
    <property type="match status" value="1"/>
</dbReference>
<dbReference type="SMART" id="SM00368">
    <property type="entry name" value="LRR_RI"/>
    <property type="match status" value="7"/>
</dbReference>
<dbReference type="SUPFAM" id="SSF52047">
    <property type="entry name" value="RNI-like"/>
    <property type="match status" value="1"/>
</dbReference>
<dbReference type="PROSITE" id="PS50837">
    <property type="entry name" value="NACHT"/>
    <property type="match status" value="1"/>
</dbReference>
<organism>
    <name type="scientific">Homo sapiens</name>
    <name type="common">Human</name>
    <dbReference type="NCBI Taxonomy" id="9606"/>
    <lineage>
        <taxon>Eukaryota</taxon>
        <taxon>Metazoa</taxon>
        <taxon>Chordata</taxon>
        <taxon>Craniata</taxon>
        <taxon>Vertebrata</taxon>
        <taxon>Euteleostomi</taxon>
        <taxon>Mammalia</taxon>
        <taxon>Eutheria</taxon>
        <taxon>Euarchontoglires</taxon>
        <taxon>Primates</taxon>
        <taxon>Haplorrhini</taxon>
        <taxon>Catarrhini</taxon>
        <taxon>Hominidae</taxon>
        <taxon>Homo</taxon>
    </lineage>
</organism>
<protein>
    <recommendedName>
        <fullName>NLR family member X1</fullName>
    </recommendedName>
    <alternativeName>
        <fullName>Caterpiller protein 11.3</fullName>
        <shortName>CLR11.3</shortName>
    </alternativeName>
    <alternativeName>
        <fullName evidence="17">Nucleotide-binding oligomerization domain protein 5</fullName>
    </alternativeName>
    <alternativeName>
        <fullName evidence="13">Nucleotide-binding oligomerization domain protein 9</fullName>
    </alternativeName>
</protein>
<accession>Q86UT6</accession>
<accession>A8K6Q1</accession>
<accession>B3KPK2</accession>
<accession>B3KTA2</accession>
<accession>Q7RTR3</accession>
<accession>Q96D51</accession>
<accession>Q9H724</accession>